<protein>
    <recommendedName>
        <fullName evidence="1">tRNA-2-methylthio-N(6)-dimethylallyladenosine synthase</fullName>
        <ecNumber evidence="1">2.8.4.3</ecNumber>
    </recommendedName>
    <alternativeName>
        <fullName evidence="1">(Dimethylallyl)adenosine tRNA methylthiotransferase MiaB</fullName>
    </alternativeName>
    <alternativeName>
        <fullName evidence="1">tRNA-i(6)A37 methylthiotransferase</fullName>
    </alternativeName>
</protein>
<sequence>MNHAKVNQHPGQATLPETAEGQVRTYEVKTYGCQMNVHDSERLSGLLEEAGYVAAPEDTTPDLVVFNTCAVRENADMRLYGTLGNLRSVKEKNPGMQIAVGGCLAQKDKDTVVKKAPWVDVVFGTHNIGSLPTLLQRAEHNAQAEVEIVDSLEQFPSVLSAKRESAYAGWVSVSVGCNNTCTFCIVPSLRGKEQDRRPGDILAEVQALVDQGVTEVTLLGQNVNAYGVNFVDPELERDRSAFSKLLRACGEIEGLERVRFTSPHPAEFTSDVIDAMAETPNICPQLHMPLQSGSDKVLKEMRRSYRSKKFLSILDEVRAKIPHASITTDIIVGFPGETEEDFQATLDVVKKARFTSAYTFQYSPRPGTPAAEYENQLPKEVVQERYERLMVVQEQVCEEENQKLIGTTVELLVQAGGGRKNDATKRMSGRARDGRLVHFAPEGDIDGEIRPGDFVTVTVTEAKPFFLIADSGVQTHRRTKAGDNSAVGQVPTTAPIGVGLGLPQIGAPKVAPATESACCSIN</sequence>
<organism>
    <name type="scientific">Corynebacterium glutamicum (strain ATCC 13032 / DSM 20300 / JCM 1318 / BCRC 11384 / CCUG 27702 / LMG 3730 / NBRC 12168 / NCIMB 10025 / NRRL B-2784 / 534)</name>
    <dbReference type="NCBI Taxonomy" id="196627"/>
    <lineage>
        <taxon>Bacteria</taxon>
        <taxon>Bacillati</taxon>
        <taxon>Actinomycetota</taxon>
        <taxon>Actinomycetes</taxon>
        <taxon>Mycobacteriales</taxon>
        <taxon>Corynebacteriaceae</taxon>
        <taxon>Corynebacterium</taxon>
    </lineage>
</organism>
<comment type="function">
    <text evidence="1">Catalyzes the methylthiolation of N6-(dimethylallyl)adenosine (i(6)A), leading to the formation of 2-methylthio-N6-(dimethylallyl)adenosine (ms(2)i(6)A) at position 37 in tRNAs that read codons beginning with uridine.</text>
</comment>
<comment type="catalytic activity">
    <reaction evidence="1">
        <text>N(6)-dimethylallyladenosine(37) in tRNA + (sulfur carrier)-SH + AH2 + 2 S-adenosyl-L-methionine = 2-methylsulfanyl-N(6)-dimethylallyladenosine(37) in tRNA + (sulfur carrier)-H + 5'-deoxyadenosine + L-methionine + A + S-adenosyl-L-homocysteine + 2 H(+)</text>
        <dbReference type="Rhea" id="RHEA:37067"/>
        <dbReference type="Rhea" id="RHEA-COMP:10375"/>
        <dbReference type="Rhea" id="RHEA-COMP:10376"/>
        <dbReference type="Rhea" id="RHEA-COMP:14737"/>
        <dbReference type="Rhea" id="RHEA-COMP:14739"/>
        <dbReference type="ChEBI" id="CHEBI:13193"/>
        <dbReference type="ChEBI" id="CHEBI:15378"/>
        <dbReference type="ChEBI" id="CHEBI:17319"/>
        <dbReference type="ChEBI" id="CHEBI:17499"/>
        <dbReference type="ChEBI" id="CHEBI:29917"/>
        <dbReference type="ChEBI" id="CHEBI:57844"/>
        <dbReference type="ChEBI" id="CHEBI:57856"/>
        <dbReference type="ChEBI" id="CHEBI:59789"/>
        <dbReference type="ChEBI" id="CHEBI:64428"/>
        <dbReference type="ChEBI" id="CHEBI:74415"/>
        <dbReference type="ChEBI" id="CHEBI:74417"/>
        <dbReference type="EC" id="2.8.4.3"/>
    </reaction>
</comment>
<comment type="cofactor">
    <cofactor evidence="1">
        <name>[4Fe-4S] cluster</name>
        <dbReference type="ChEBI" id="CHEBI:49883"/>
    </cofactor>
    <text evidence="1">Binds 2 [4Fe-4S] clusters. One cluster is coordinated with 3 cysteines and an exchangeable S-adenosyl-L-methionine.</text>
</comment>
<comment type="subunit">
    <text evidence="1">Monomer.</text>
</comment>
<comment type="subcellular location">
    <subcellularLocation>
        <location evidence="1">Cytoplasm</location>
    </subcellularLocation>
</comment>
<comment type="similarity">
    <text evidence="1">Belongs to the methylthiotransferase family. MiaB subfamily.</text>
</comment>
<comment type="sequence caution" evidence="3">
    <conflict type="erroneous initiation">
        <sequence resource="EMBL-CDS" id="CAF20290"/>
    </conflict>
</comment>
<gene>
    <name evidence="1" type="primary">miaB</name>
    <name type="ordered locus">Cgl1949</name>
    <name type="ordered locus">cg2135</name>
</gene>
<feature type="chain" id="PRO_0000374240" description="tRNA-2-methylthio-N(6)-dimethylallyladenosine synthase">
    <location>
        <begin position="1"/>
        <end position="522"/>
    </location>
</feature>
<feature type="domain" description="MTTase N-terminal" evidence="1">
    <location>
        <begin position="24"/>
        <end position="140"/>
    </location>
</feature>
<feature type="domain" description="Radical SAM core" evidence="2">
    <location>
        <begin position="163"/>
        <end position="399"/>
    </location>
</feature>
<feature type="domain" description="TRAM" evidence="1">
    <location>
        <begin position="402"/>
        <end position="473"/>
    </location>
</feature>
<feature type="binding site" evidence="1">
    <location>
        <position position="33"/>
    </location>
    <ligand>
        <name>[4Fe-4S] cluster</name>
        <dbReference type="ChEBI" id="CHEBI:49883"/>
        <label>1</label>
    </ligand>
</feature>
<feature type="binding site" evidence="1">
    <location>
        <position position="69"/>
    </location>
    <ligand>
        <name>[4Fe-4S] cluster</name>
        <dbReference type="ChEBI" id="CHEBI:49883"/>
        <label>1</label>
    </ligand>
</feature>
<feature type="binding site" evidence="1">
    <location>
        <position position="103"/>
    </location>
    <ligand>
        <name>[4Fe-4S] cluster</name>
        <dbReference type="ChEBI" id="CHEBI:49883"/>
        <label>1</label>
    </ligand>
</feature>
<feature type="binding site" evidence="1">
    <location>
        <position position="177"/>
    </location>
    <ligand>
        <name>[4Fe-4S] cluster</name>
        <dbReference type="ChEBI" id="CHEBI:49883"/>
        <label>2</label>
        <note>4Fe-4S-S-AdoMet</note>
    </ligand>
</feature>
<feature type="binding site" evidence="1">
    <location>
        <position position="181"/>
    </location>
    <ligand>
        <name>[4Fe-4S] cluster</name>
        <dbReference type="ChEBI" id="CHEBI:49883"/>
        <label>2</label>
        <note>4Fe-4S-S-AdoMet</note>
    </ligand>
</feature>
<feature type="binding site" evidence="1">
    <location>
        <position position="184"/>
    </location>
    <ligand>
        <name>[4Fe-4S] cluster</name>
        <dbReference type="ChEBI" id="CHEBI:49883"/>
        <label>2</label>
        <note>4Fe-4S-S-AdoMet</note>
    </ligand>
</feature>
<proteinExistence type="inferred from homology"/>
<evidence type="ECO:0000255" key="1">
    <source>
        <dbReference type="HAMAP-Rule" id="MF_01864"/>
    </source>
</evidence>
<evidence type="ECO:0000255" key="2">
    <source>
        <dbReference type="PROSITE-ProRule" id="PRU01266"/>
    </source>
</evidence>
<evidence type="ECO:0000305" key="3"/>
<dbReference type="EC" id="2.8.4.3" evidence="1"/>
<dbReference type="EMBL" id="BA000036">
    <property type="protein sequence ID" value="BAB99342.1"/>
    <property type="molecule type" value="Genomic_DNA"/>
</dbReference>
<dbReference type="EMBL" id="BX927153">
    <property type="protein sequence ID" value="CAF20290.1"/>
    <property type="status" value="ALT_INIT"/>
    <property type="molecule type" value="Genomic_DNA"/>
</dbReference>
<dbReference type="RefSeq" id="NP_601156.1">
    <property type="nucleotide sequence ID" value="NC_003450.3"/>
</dbReference>
<dbReference type="RefSeq" id="WP_011014777.1">
    <property type="nucleotide sequence ID" value="NC_006958.1"/>
</dbReference>
<dbReference type="SMR" id="Q8NP67"/>
<dbReference type="STRING" id="196627.cg2135"/>
<dbReference type="GeneID" id="1019906"/>
<dbReference type="KEGG" id="cgb:cg2135"/>
<dbReference type="KEGG" id="cgl:Cgl1949"/>
<dbReference type="PATRIC" id="fig|196627.13.peg.1887"/>
<dbReference type="eggNOG" id="COG0621">
    <property type="taxonomic scope" value="Bacteria"/>
</dbReference>
<dbReference type="HOGENOM" id="CLU_018697_2_2_11"/>
<dbReference type="OrthoDB" id="9805215at2"/>
<dbReference type="BioCyc" id="CORYNE:G18NG-11541-MONOMER"/>
<dbReference type="Proteomes" id="UP000000582">
    <property type="component" value="Chromosome"/>
</dbReference>
<dbReference type="Proteomes" id="UP000001009">
    <property type="component" value="Chromosome"/>
</dbReference>
<dbReference type="GO" id="GO:0005829">
    <property type="term" value="C:cytosol"/>
    <property type="evidence" value="ECO:0007669"/>
    <property type="project" value="TreeGrafter"/>
</dbReference>
<dbReference type="GO" id="GO:0051539">
    <property type="term" value="F:4 iron, 4 sulfur cluster binding"/>
    <property type="evidence" value="ECO:0007669"/>
    <property type="project" value="UniProtKB-UniRule"/>
</dbReference>
<dbReference type="GO" id="GO:0046872">
    <property type="term" value="F:metal ion binding"/>
    <property type="evidence" value="ECO:0007669"/>
    <property type="project" value="UniProtKB-KW"/>
</dbReference>
<dbReference type="GO" id="GO:0035597">
    <property type="term" value="F:N6-isopentenyladenosine methylthiotransferase activity"/>
    <property type="evidence" value="ECO:0007669"/>
    <property type="project" value="TreeGrafter"/>
</dbReference>
<dbReference type="CDD" id="cd01335">
    <property type="entry name" value="Radical_SAM"/>
    <property type="match status" value="1"/>
</dbReference>
<dbReference type="FunFam" id="3.40.50.12160:FF:000003">
    <property type="entry name" value="CDK5 regulatory subunit-associated protein 1"/>
    <property type="match status" value="1"/>
</dbReference>
<dbReference type="FunFam" id="3.80.30.20:FF:000001">
    <property type="entry name" value="tRNA-2-methylthio-N(6)-dimethylallyladenosine synthase 2"/>
    <property type="match status" value="1"/>
</dbReference>
<dbReference type="Gene3D" id="3.40.50.12160">
    <property type="entry name" value="Methylthiotransferase, N-terminal domain"/>
    <property type="match status" value="1"/>
</dbReference>
<dbReference type="Gene3D" id="3.80.30.20">
    <property type="entry name" value="tm_1862 like domain"/>
    <property type="match status" value="1"/>
</dbReference>
<dbReference type="HAMAP" id="MF_01864">
    <property type="entry name" value="tRNA_metthiotr_MiaB"/>
    <property type="match status" value="1"/>
</dbReference>
<dbReference type="InterPro" id="IPR006638">
    <property type="entry name" value="Elp3/MiaA/NifB-like_rSAM"/>
</dbReference>
<dbReference type="InterPro" id="IPR005839">
    <property type="entry name" value="Methylthiotransferase"/>
</dbReference>
<dbReference type="InterPro" id="IPR020612">
    <property type="entry name" value="Methylthiotransferase_CS"/>
</dbReference>
<dbReference type="InterPro" id="IPR013848">
    <property type="entry name" value="Methylthiotransferase_N"/>
</dbReference>
<dbReference type="InterPro" id="IPR038135">
    <property type="entry name" value="Methylthiotransferase_N_sf"/>
</dbReference>
<dbReference type="InterPro" id="IPR006463">
    <property type="entry name" value="MiaB_methiolase"/>
</dbReference>
<dbReference type="InterPro" id="IPR007197">
    <property type="entry name" value="rSAM"/>
</dbReference>
<dbReference type="InterPro" id="IPR023404">
    <property type="entry name" value="rSAM_horseshoe"/>
</dbReference>
<dbReference type="InterPro" id="IPR002792">
    <property type="entry name" value="TRAM_dom"/>
</dbReference>
<dbReference type="NCBIfam" id="TIGR01574">
    <property type="entry name" value="miaB-methiolase"/>
    <property type="match status" value="1"/>
</dbReference>
<dbReference type="NCBIfam" id="TIGR00089">
    <property type="entry name" value="MiaB/RimO family radical SAM methylthiotransferase"/>
    <property type="match status" value="1"/>
</dbReference>
<dbReference type="PANTHER" id="PTHR43020">
    <property type="entry name" value="CDK5 REGULATORY SUBUNIT-ASSOCIATED PROTEIN 1"/>
    <property type="match status" value="1"/>
</dbReference>
<dbReference type="PANTHER" id="PTHR43020:SF2">
    <property type="entry name" value="MITOCHONDRIAL TRNA METHYLTHIOTRANSFERASE CDK5RAP1"/>
    <property type="match status" value="1"/>
</dbReference>
<dbReference type="Pfam" id="PF04055">
    <property type="entry name" value="Radical_SAM"/>
    <property type="match status" value="1"/>
</dbReference>
<dbReference type="Pfam" id="PF00919">
    <property type="entry name" value="UPF0004"/>
    <property type="match status" value="1"/>
</dbReference>
<dbReference type="SFLD" id="SFLDF00273">
    <property type="entry name" value="(dimethylallyl)adenosine_tRNA"/>
    <property type="match status" value="1"/>
</dbReference>
<dbReference type="SFLD" id="SFLDG01082">
    <property type="entry name" value="B12-binding_domain_containing"/>
    <property type="match status" value="1"/>
</dbReference>
<dbReference type="SFLD" id="SFLDS00029">
    <property type="entry name" value="Radical_SAM"/>
    <property type="match status" value="1"/>
</dbReference>
<dbReference type="SMART" id="SM00729">
    <property type="entry name" value="Elp3"/>
    <property type="match status" value="1"/>
</dbReference>
<dbReference type="SUPFAM" id="SSF102114">
    <property type="entry name" value="Radical SAM enzymes"/>
    <property type="match status" value="1"/>
</dbReference>
<dbReference type="PROSITE" id="PS51449">
    <property type="entry name" value="MTTASE_N"/>
    <property type="match status" value="1"/>
</dbReference>
<dbReference type="PROSITE" id="PS01278">
    <property type="entry name" value="MTTASE_RADICAL"/>
    <property type="match status" value="1"/>
</dbReference>
<dbReference type="PROSITE" id="PS51918">
    <property type="entry name" value="RADICAL_SAM"/>
    <property type="match status" value="1"/>
</dbReference>
<dbReference type="PROSITE" id="PS50926">
    <property type="entry name" value="TRAM"/>
    <property type="match status" value="1"/>
</dbReference>
<accession>Q8NP67</accession>
<accession>Q6M477</accession>
<keyword id="KW-0004">4Fe-4S</keyword>
<keyword id="KW-0963">Cytoplasm</keyword>
<keyword id="KW-0408">Iron</keyword>
<keyword id="KW-0411">Iron-sulfur</keyword>
<keyword id="KW-0479">Metal-binding</keyword>
<keyword id="KW-1185">Reference proteome</keyword>
<keyword id="KW-0949">S-adenosyl-L-methionine</keyword>
<keyword id="KW-0808">Transferase</keyword>
<keyword id="KW-0819">tRNA processing</keyword>
<name>MIAB_CORGL</name>
<reference key="1">
    <citation type="journal article" date="2003" name="Appl. Microbiol. Biotechnol.">
        <title>The Corynebacterium glutamicum genome: features and impacts on biotechnological processes.</title>
        <authorList>
            <person name="Ikeda M."/>
            <person name="Nakagawa S."/>
        </authorList>
    </citation>
    <scope>NUCLEOTIDE SEQUENCE [LARGE SCALE GENOMIC DNA]</scope>
    <source>
        <strain>ATCC 13032 / DSM 20300 / JCM 1318 / BCRC 11384 / CCUG 27702 / LMG 3730 / NBRC 12168 / NCIMB 10025 / NRRL B-2784 / 534</strain>
    </source>
</reference>
<reference key="2">
    <citation type="journal article" date="2003" name="J. Biotechnol.">
        <title>The complete Corynebacterium glutamicum ATCC 13032 genome sequence and its impact on the production of L-aspartate-derived amino acids and vitamins.</title>
        <authorList>
            <person name="Kalinowski J."/>
            <person name="Bathe B."/>
            <person name="Bartels D."/>
            <person name="Bischoff N."/>
            <person name="Bott M."/>
            <person name="Burkovski A."/>
            <person name="Dusch N."/>
            <person name="Eggeling L."/>
            <person name="Eikmanns B.J."/>
            <person name="Gaigalat L."/>
            <person name="Goesmann A."/>
            <person name="Hartmann M."/>
            <person name="Huthmacher K."/>
            <person name="Kraemer R."/>
            <person name="Linke B."/>
            <person name="McHardy A.C."/>
            <person name="Meyer F."/>
            <person name="Moeckel B."/>
            <person name="Pfefferle W."/>
            <person name="Puehler A."/>
            <person name="Rey D.A."/>
            <person name="Rueckert C."/>
            <person name="Rupp O."/>
            <person name="Sahm H."/>
            <person name="Wendisch V.F."/>
            <person name="Wiegraebe I."/>
            <person name="Tauch A."/>
        </authorList>
    </citation>
    <scope>NUCLEOTIDE SEQUENCE [LARGE SCALE GENOMIC DNA]</scope>
    <source>
        <strain>ATCC 13032 / DSM 20300 / JCM 1318 / BCRC 11384 / CCUG 27702 / LMG 3730 / NBRC 12168 / NCIMB 10025 / NRRL B-2784 / 534</strain>
    </source>
</reference>